<keyword id="KW-0227">DNA damage</keyword>
<keyword id="KW-0234">DNA repair</keyword>
<keyword id="KW-0255">Endonuclease</keyword>
<keyword id="KW-0378">Hydrolase</keyword>
<keyword id="KW-0479">Metal-binding</keyword>
<keyword id="KW-0540">Nuclease</keyword>
<keyword id="KW-0862">Zinc</keyword>
<dbReference type="EC" id="3.1.21.2" evidence="1"/>
<dbReference type="EMBL" id="CP001080">
    <property type="protein sequence ID" value="ACD67335.1"/>
    <property type="molecule type" value="Genomic_DNA"/>
</dbReference>
<dbReference type="RefSeq" id="WP_012460390.1">
    <property type="nucleotide sequence ID" value="NC_010730.1"/>
</dbReference>
<dbReference type="SMR" id="B2V7A4"/>
<dbReference type="STRING" id="436114.SYO3AOP1_1738"/>
<dbReference type="KEGG" id="sul:SYO3AOP1_1738"/>
<dbReference type="eggNOG" id="COG0648">
    <property type="taxonomic scope" value="Bacteria"/>
</dbReference>
<dbReference type="HOGENOM" id="CLU_025885_0_1_0"/>
<dbReference type="GO" id="GO:0008833">
    <property type="term" value="F:deoxyribonuclease IV (phage-T4-induced) activity"/>
    <property type="evidence" value="ECO:0007669"/>
    <property type="project" value="UniProtKB-UniRule"/>
</dbReference>
<dbReference type="GO" id="GO:0003677">
    <property type="term" value="F:DNA binding"/>
    <property type="evidence" value="ECO:0007669"/>
    <property type="project" value="InterPro"/>
</dbReference>
<dbReference type="GO" id="GO:0003906">
    <property type="term" value="F:DNA-(apurinic or apyrimidinic site) endonuclease activity"/>
    <property type="evidence" value="ECO:0007669"/>
    <property type="project" value="TreeGrafter"/>
</dbReference>
<dbReference type="GO" id="GO:0008081">
    <property type="term" value="F:phosphoric diester hydrolase activity"/>
    <property type="evidence" value="ECO:0007669"/>
    <property type="project" value="TreeGrafter"/>
</dbReference>
<dbReference type="GO" id="GO:0008270">
    <property type="term" value="F:zinc ion binding"/>
    <property type="evidence" value="ECO:0007669"/>
    <property type="project" value="UniProtKB-UniRule"/>
</dbReference>
<dbReference type="GO" id="GO:0006284">
    <property type="term" value="P:base-excision repair"/>
    <property type="evidence" value="ECO:0007669"/>
    <property type="project" value="TreeGrafter"/>
</dbReference>
<dbReference type="CDD" id="cd00019">
    <property type="entry name" value="AP2Ec"/>
    <property type="match status" value="1"/>
</dbReference>
<dbReference type="FunFam" id="3.20.20.150:FF:000001">
    <property type="entry name" value="Probable endonuclease 4"/>
    <property type="match status" value="1"/>
</dbReference>
<dbReference type="Gene3D" id="3.20.20.150">
    <property type="entry name" value="Divalent-metal-dependent TIM barrel enzymes"/>
    <property type="match status" value="1"/>
</dbReference>
<dbReference type="HAMAP" id="MF_00152">
    <property type="entry name" value="Nfo"/>
    <property type="match status" value="1"/>
</dbReference>
<dbReference type="InterPro" id="IPR001719">
    <property type="entry name" value="AP_endonuc_2"/>
</dbReference>
<dbReference type="InterPro" id="IPR018246">
    <property type="entry name" value="AP_endonuc_F2_Zn_BS"/>
</dbReference>
<dbReference type="InterPro" id="IPR036237">
    <property type="entry name" value="Xyl_isomerase-like_sf"/>
</dbReference>
<dbReference type="InterPro" id="IPR013022">
    <property type="entry name" value="Xyl_isomerase-like_TIM-brl"/>
</dbReference>
<dbReference type="NCBIfam" id="TIGR00587">
    <property type="entry name" value="nfo"/>
    <property type="match status" value="1"/>
</dbReference>
<dbReference type="PANTHER" id="PTHR21445:SF0">
    <property type="entry name" value="APURINIC-APYRIMIDINIC ENDONUCLEASE"/>
    <property type="match status" value="1"/>
</dbReference>
<dbReference type="PANTHER" id="PTHR21445">
    <property type="entry name" value="ENDONUCLEASE IV ENDODEOXYRIBONUCLEASE IV"/>
    <property type="match status" value="1"/>
</dbReference>
<dbReference type="Pfam" id="PF01261">
    <property type="entry name" value="AP_endonuc_2"/>
    <property type="match status" value="1"/>
</dbReference>
<dbReference type="SMART" id="SM00518">
    <property type="entry name" value="AP2Ec"/>
    <property type="match status" value="1"/>
</dbReference>
<dbReference type="SUPFAM" id="SSF51658">
    <property type="entry name" value="Xylose isomerase-like"/>
    <property type="match status" value="1"/>
</dbReference>
<dbReference type="PROSITE" id="PS00730">
    <property type="entry name" value="AP_NUCLEASE_F2_2"/>
    <property type="match status" value="1"/>
</dbReference>
<dbReference type="PROSITE" id="PS00731">
    <property type="entry name" value="AP_NUCLEASE_F2_3"/>
    <property type="match status" value="1"/>
</dbReference>
<dbReference type="PROSITE" id="PS51432">
    <property type="entry name" value="AP_NUCLEASE_F2_4"/>
    <property type="match status" value="1"/>
</dbReference>
<sequence length="279" mass="32223">MVNIGTHVSSSKSLDLVFERGKEVEASSIQFFIRSPRSWAWIERTDEEKERFLQKKNEYKIHPLVVHASYLFNLASFEEELYKKSIESVIQELKLCEELKIDYYVIHAGKSKGNPKKQAIDRILRAFEEIFSRLNLKNTTFLVETLAGQSGEVGATLEEVYTLIEPFENEKIGVCLDTCHIFASGYQINTDEGFNSFKKELIDYNLLEKTKVIHCNDSKAPFNSKKDRHEHIGKGFIGLEGFRIFLNDDDFNKLPFILETPKEGDMDRVNINLLKSLIK</sequence>
<name>END4_SULSY</name>
<feature type="chain" id="PRO_1000096908" description="Probable endonuclease 4">
    <location>
        <begin position="1"/>
        <end position="279"/>
    </location>
</feature>
<feature type="binding site" evidence="1">
    <location>
        <position position="67"/>
    </location>
    <ligand>
        <name>Zn(2+)</name>
        <dbReference type="ChEBI" id="CHEBI:29105"/>
        <label>1</label>
    </ligand>
</feature>
<feature type="binding site" evidence="1">
    <location>
        <position position="107"/>
    </location>
    <ligand>
        <name>Zn(2+)</name>
        <dbReference type="ChEBI" id="CHEBI:29105"/>
        <label>1</label>
    </ligand>
</feature>
<feature type="binding site" evidence="1">
    <location>
        <position position="144"/>
    </location>
    <ligand>
        <name>Zn(2+)</name>
        <dbReference type="ChEBI" id="CHEBI:29105"/>
        <label>1</label>
    </ligand>
</feature>
<feature type="binding site" evidence="1">
    <location>
        <position position="144"/>
    </location>
    <ligand>
        <name>Zn(2+)</name>
        <dbReference type="ChEBI" id="CHEBI:29105"/>
        <label>2</label>
    </ligand>
</feature>
<feature type="binding site" evidence="1">
    <location>
        <position position="177"/>
    </location>
    <ligand>
        <name>Zn(2+)</name>
        <dbReference type="ChEBI" id="CHEBI:29105"/>
        <label>2</label>
    </ligand>
</feature>
<feature type="binding site" evidence="1">
    <location>
        <position position="180"/>
    </location>
    <ligand>
        <name>Zn(2+)</name>
        <dbReference type="ChEBI" id="CHEBI:29105"/>
        <label>3</label>
    </ligand>
</feature>
<feature type="binding site" evidence="1">
    <location>
        <position position="214"/>
    </location>
    <ligand>
        <name>Zn(2+)</name>
        <dbReference type="ChEBI" id="CHEBI:29105"/>
        <label>2</label>
    </ligand>
</feature>
<feature type="binding site" evidence="1">
    <location>
        <position position="227"/>
    </location>
    <ligand>
        <name>Zn(2+)</name>
        <dbReference type="ChEBI" id="CHEBI:29105"/>
        <label>3</label>
    </ligand>
</feature>
<feature type="binding site" evidence="1">
    <location>
        <position position="229"/>
    </location>
    <ligand>
        <name>Zn(2+)</name>
        <dbReference type="ChEBI" id="CHEBI:29105"/>
        <label>3</label>
    </ligand>
</feature>
<feature type="binding site" evidence="1">
    <location>
        <position position="259"/>
    </location>
    <ligand>
        <name>Zn(2+)</name>
        <dbReference type="ChEBI" id="CHEBI:29105"/>
        <label>2</label>
    </ligand>
</feature>
<reference key="1">
    <citation type="journal article" date="2009" name="J. Bacteriol.">
        <title>Complete and draft genome sequences of six members of the Aquificales.</title>
        <authorList>
            <person name="Reysenbach A.-L."/>
            <person name="Hamamura N."/>
            <person name="Podar M."/>
            <person name="Griffiths E."/>
            <person name="Ferreira S."/>
            <person name="Hochstein R."/>
            <person name="Heidelberg J."/>
            <person name="Johnson J."/>
            <person name="Mead D."/>
            <person name="Pohorille A."/>
            <person name="Sarmiento M."/>
            <person name="Schweighofer K."/>
            <person name="Seshadri R."/>
            <person name="Voytek M.A."/>
        </authorList>
    </citation>
    <scope>NUCLEOTIDE SEQUENCE [LARGE SCALE GENOMIC DNA]</scope>
    <source>
        <strain>YO3AOP1</strain>
    </source>
</reference>
<comment type="function">
    <text evidence="1">Endonuclease IV plays a role in DNA repair. It cleaves phosphodiester bonds at apurinic or apyrimidinic (AP) sites, generating a 3'-hydroxyl group and a 5'-terminal sugar phosphate.</text>
</comment>
<comment type="catalytic activity">
    <reaction evidence="1">
        <text>Endonucleolytic cleavage to 5'-phosphooligonucleotide end-products.</text>
        <dbReference type="EC" id="3.1.21.2"/>
    </reaction>
</comment>
<comment type="cofactor">
    <cofactor evidence="1">
        <name>Zn(2+)</name>
        <dbReference type="ChEBI" id="CHEBI:29105"/>
    </cofactor>
    <text evidence="1">Binds 3 Zn(2+) ions.</text>
</comment>
<comment type="similarity">
    <text evidence="1">Belongs to the AP endonuclease 2 family.</text>
</comment>
<accession>B2V7A4</accession>
<proteinExistence type="inferred from homology"/>
<protein>
    <recommendedName>
        <fullName evidence="1">Probable endonuclease 4</fullName>
        <ecNumber evidence="1">3.1.21.2</ecNumber>
    </recommendedName>
    <alternativeName>
        <fullName evidence="1">Endodeoxyribonuclease IV</fullName>
    </alternativeName>
    <alternativeName>
        <fullName evidence="1">Endonuclease IV</fullName>
    </alternativeName>
</protein>
<evidence type="ECO:0000255" key="1">
    <source>
        <dbReference type="HAMAP-Rule" id="MF_00152"/>
    </source>
</evidence>
<gene>
    <name evidence="1" type="primary">nfo</name>
    <name type="ordered locus">SYO3AOP1_1738</name>
</gene>
<organism>
    <name type="scientific">Sulfurihydrogenibium sp. (strain YO3AOP1)</name>
    <dbReference type="NCBI Taxonomy" id="436114"/>
    <lineage>
        <taxon>Bacteria</taxon>
        <taxon>Pseudomonadati</taxon>
        <taxon>Aquificota</taxon>
        <taxon>Aquificia</taxon>
        <taxon>Aquificales</taxon>
        <taxon>Hydrogenothermaceae</taxon>
        <taxon>Sulfurihydrogenibium</taxon>
    </lineage>
</organism>